<proteinExistence type="inferred from homology"/>
<organism>
    <name type="scientific">Cereibacter sphaeroides (strain KD131 / KCTC 12085)</name>
    <name type="common">Rhodobacter sphaeroides</name>
    <dbReference type="NCBI Taxonomy" id="557760"/>
    <lineage>
        <taxon>Bacteria</taxon>
        <taxon>Pseudomonadati</taxon>
        <taxon>Pseudomonadota</taxon>
        <taxon>Alphaproteobacteria</taxon>
        <taxon>Rhodobacterales</taxon>
        <taxon>Paracoccaceae</taxon>
        <taxon>Cereibacter</taxon>
    </lineage>
</organism>
<reference key="1">
    <citation type="journal article" date="2009" name="J. Bacteriol.">
        <title>Complete genome sequence of Rhodobacter sphaeroides KD131.</title>
        <authorList>
            <person name="Lim S.-K."/>
            <person name="Kim S.J."/>
            <person name="Cha S.H."/>
            <person name="Oh Y.-K."/>
            <person name="Rhee H.-J."/>
            <person name="Kim M.-S."/>
            <person name="Lee J.K."/>
        </authorList>
    </citation>
    <scope>NUCLEOTIDE SEQUENCE [LARGE SCALE GENOMIC DNA]</scope>
    <source>
        <strain>KD131 / KCTC 12085</strain>
    </source>
</reference>
<gene>
    <name evidence="1" type="primary">nuoK</name>
    <name type="ordered locus">RSKD131_0841</name>
</gene>
<sequence length="101" mass="10872">MVGLEHYLTVSAALLVIGIFGIFLNRKNVIVILMSIELMLLAVNINLVAFSSFLGDLTGQVFTLFVLTVAAAEAAIGLAILVTFFRNRGTIDVEDVNVMKG</sequence>
<dbReference type="EC" id="7.1.1.-" evidence="1"/>
<dbReference type="EMBL" id="CP001150">
    <property type="protein sequence ID" value="ACM00701.1"/>
    <property type="molecule type" value="Genomic_DNA"/>
</dbReference>
<dbReference type="RefSeq" id="WP_002719678.1">
    <property type="nucleotide sequence ID" value="NC_011963.1"/>
</dbReference>
<dbReference type="SMR" id="B9KQX4"/>
<dbReference type="GeneID" id="67446282"/>
<dbReference type="KEGG" id="rsk:RSKD131_0841"/>
<dbReference type="HOGENOM" id="CLU_144724_2_0_5"/>
<dbReference type="GO" id="GO:0030964">
    <property type="term" value="C:NADH dehydrogenase complex"/>
    <property type="evidence" value="ECO:0007669"/>
    <property type="project" value="TreeGrafter"/>
</dbReference>
<dbReference type="GO" id="GO:0005886">
    <property type="term" value="C:plasma membrane"/>
    <property type="evidence" value="ECO:0007669"/>
    <property type="project" value="UniProtKB-SubCell"/>
</dbReference>
<dbReference type="GO" id="GO:0050136">
    <property type="term" value="F:NADH:ubiquinone reductase (non-electrogenic) activity"/>
    <property type="evidence" value="ECO:0007669"/>
    <property type="project" value="UniProtKB-UniRule"/>
</dbReference>
<dbReference type="GO" id="GO:0048038">
    <property type="term" value="F:quinone binding"/>
    <property type="evidence" value="ECO:0007669"/>
    <property type="project" value="UniProtKB-KW"/>
</dbReference>
<dbReference type="GO" id="GO:0042773">
    <property type="term" value="P:ATP synthesis coupled electron transport"/>
    <property type="evidence" value="ECO:0007669"/>
    <property type="project" value="InterPro"/>
</dbReference>
<dbReference type="FunFam" id="1.10.287.3510:FF:000001">
    <property type="entry name" value="NADH-quinone oxidoreductase subunit K"/>
    <property type="match status" value="1"/>
</dbReference>
<dbReference type="Gene3D" id="1.10.287.3510">
    <property type="match status" value="1"/>
</dbReference>
<dbReference type="HAMAP" id="MF_01456">
    <property type="entry name" value="NDH1_NuoK"/>
    <property type="match status" value="1"/>
</dbReference>
<dbReference type="InterPro" id="IPR001133">
    <property type="entry name" value="NADH_UbQ_OxRdtase_chain4L/K"/>
</dbReference>
<dbReference type="InterPro" id="IPR039428">
    <property type="entry name" value="NUOK/Mnh_C1-like"/>
</dbReference>
<dbReference type="NCBIfam" id="NF004320">
    <property type="entry name" value="PRK05715.1-2"/>
    <property type="match status" value="1"/>
</dbReference>
<dbReference type="NCBIfam" id="NF004321">
    <property type="entry name" value="PRK05715.1-3"/>
    <property type="match status" value="1"/>
</dbReference>
<dbReference type="NCBIfam" id="NF004323">
    <property type="entry name" value="PRK05715.1-5"/>
    <property type="match status" value="1"/>
</dbReference>
<dbReference type="PANTHER" id="PTHR11434:SF21">
    <property type="entry name" value="NADH DEHYDROGENASE SUBUNIT 4L-RELATED"/>
    <property type="match status" value="1"/>
</dbReference>
<dbReference type="PANTHER" id="PTHR11434">
    <property type="entry name" value="NADH-UBIQUINONE OXIDOREDUCTASE SUBUNIT ND4L"/>
    <property type="match status" value="1"/>
</dbReference>
<dbReference type="Pfam" id="PF00420">
    <property type="entry name" value="Oxidored_q2"/>
    <property type="match status" value="1"/>
</dbReference>
<protein>
    <recommendedName>
        <fullName evidence="1">NADH-quinone oxidoreductase subunit K</fullName>
        <ecNumber evidence="1">7.1.1.-</ecNumber>
    </recommendedName>
    <alternativeName>
        <fullName evidence="1">NADH dehydrogenase I subunit K</fullName>
    </alternativeName>
    <alternativeName>
        <fullName evidence="1">NDH-1 subunit K</fullName>
    </alternativeName>
</protein>
<keyword id="KW-0997">Cell inner membrane</keyword>
<keyword id="KW-1003">Cell membrane</keyword>
<keyword id="KW-0472">Membrane</keyword>
<keyword id="KW-0520">NAD</keyword>
<keyword id="KW-0874">Quinone</keyword>
<keyword id="KW-1278">Translocase</keyword>
<keyword id="KW-0812">Transmembrane</keyword>
<keyword id="KW-1133">Transmembrane helix</keyword>
<keyword id="KW-0813">Transport</keyword>
<keyword id="KW-0830">Ubiquinone</keyword>
<feature type="chain" id="PRO_0000390202" description="NADH-quinone oxidoreductase subunit K">
    <location>
        <begin position="1"/>
        <end position="101"/>
    </location>
</feature>
<feature type="transmembrane region" description="Helical" evidence="1">
    <location>
        <begin position="4"/>
        <end position="24"/>
    </location>
</feature>
<feature type="transmembrane region" description="Helical" evidence="1">
    <location>
        <begin position="30"/>
        <end position="50"/>
    </location>
</feature>
<feature type="transmembrane region" description="Helical" evidence="1">
    <location>
        <begin position="65"/>
        <end position="85"/>
    </location>
</feature>
<comment type="function">
    <text evidence="1">NDH-1 shuttles electrons from NADH, via FMN and iron-sulfur (Fe-S) centers, to quinones in the respiratory chain. The immediate electron acceptor for the enzyme in this species is believed to be ubiquinone. Couples the redox reaction to proton translocation (for every two electrons transferred, four hydrogen ions are translocated across the cytoplasmic membrane), and thus conserves the redox energy in a proton gradient.</text>
</comment>
<comment type="catalytic activity">
    <reaction evidence="1">
        <text>a quinone + NADH + 5 H(+)(in) = a quinol + NAD(+) + 4 H(+)(out)</text>
        <dbReference type="Rhea" id="RHEA:57888"/>
        <dbReference type="ChEBI" id="CHEBI:15378"/>
        <dbReference type="ChEBI" id="CHEBI:24646"/>
        <dbReference type="ChEBI" id="CHEBI:57540"/>
        <dbReference type="ChEBI" id="CHEBI:57945"/>
        <dbReference type="ChEBI" id="CHEBI:132124"/>
    </reaction>
</comment>
<comment type="subunit">
    <text evidence="1">NDH-1 is composed of 14 different subunits. Subunits NuoA, H, J, K, L, M, N constitute the membrane sector of the complex.</text>
</comment>
<comment type="subcellular location">
    <subcellularLocation>
        <location evidence="1">Cell inner membrane</location>
        <topology evidence="1">Multi-pass membrane protein</topology>
    </subcellularLocation>
</comment>
<comment type="similarity">
    <text evidence="1">Belongs to the complex I subunit 4L family.</text>
</comment>
<accession>B9KQX4</accession>
<evidence type="ECO:0000255" key="1">
    <source>
        <dbReference type="HAMAP-Rule" id="MF_01456"/>
    </source>
</evidence>
<name>NUOK_CERSK</name>